<gene>
    <name evidence="2" type="primary">HtrA2</name>
    <name type="ORF">GL24014</name>
</gene>
<organism>
    <name type="scientific">Drosophila persimilis</name>
    <name type="common">Fruit fly</name>
    <dbReference type="NCBI Taxonomy" id="7234"/>
    <lineage>
        <taxon>Eukaryota</taxon>
        <taxon>Metazoa</taxon>
        <taxon>Ecdysozoa</taxon>
        <taxon>Arthropoda</taxon>
        <taxon>Hexapoda</taxon>
        <taxon>Insecta</taxon>
        <taxon>Pterygota</taxon>
        <taxon>Neoptera</taxon>
        <taxon>Endopterygota</taxon>
        <taxon>Diptera</taxon>
        <taxon>Brachycera</taxon>
        <taxon>Muscomorpha</taxon>
        <taxon>Ephydroidea</taxon>
        <taxon>Drosophilidae</taxon>
        <taxon>Drosophila</taxon>
        <taxon>Sophophora</taxon>
    </lineage>
</organism>
<accession>B4G316</accession>
<keyword id="KW-0053">Apoptosis</keyword>
<keyword id="KW-0378">Hydrolase</keyword>
<keyword id="KW-0472">Membrane</keyword>
<keyword id="KW-0496">Mitochondrion</keyword>
<keyword id="KW-0645">Protease</keyword>
<keyword id="KW-1185">Reference proteome</keyword>
<keyword id="KW-0720">Serine protease</keyword>
<keyword id="KW-0809">Transit peptide</keyword>
<keyword id="KW-0812">Transmembrane</keyword>
<keyword id="KW-1133">Transmembrane helix</keyword>
<keyword id="KW-0865">Zymogen</keyword>
<feature type="transit peptide" description="Mitochondrion" evidence="3">
    <location>
        <begin position="1"/>
        <end status="unknown"/>
    </location>
</feature>
<feature type="propeptide" id="PRO_0000382189" evidence="3">
    <location>
        <begin status="unknown"/>
        <end position="77"/>
    </location>
</feature>
<feature type="chain" id="PRO_0000382190" description="Serine protease HTRA2, mitochondrial" evidence="2">
    <location>
        <begin position="78"/>
        <end position="427"/>
    </location>
</feature>
<feature type="transmembrane region" description="Helical" evidence="3">
    <location>
        <begin position="67"/>
        <end position="87"/>
    </location>
</feature>
<feature type="domain" description="PDZ" evidence="4">
    <location>
        <begin position="330"/>
        <end position="415"/>
    </location>
</feature>
<feature type="region of interest" description="Disordered" evidence="5">
    <location>
        <begin position="33"/>
        <end position="57"/>
    </location>
</feature>
<feature type="region of interest" description="Serine protease" evidence="3">
    <location>
        <begin position="144"/>
        <end position="307"/>
    </location>
</feature>
<feature type="short sequence motif" description="IAP-binding" evidence="3">
    <location>
        <begin position="78"/>
        <end position="81"/>
    </location>
</feature>
<feature type="active site" description="Charge relay system" evidence="1">
    <location>
        <position position="162"/>
    </location>
</feature>
<feature type="active site" description="Charge relay system" evidence="1">
    <location>
        <position position="194"/>
    </location>
</feature>
<feature type="active site" description="Charge relay system" evidence="2">
    <location>
        <position position="271"/>
    </location>
</feature>
<sequence>MALRCINNLEIFLRRCTAPTLHRCCVASSRTAHTASSSKGSGGDNSKDQENNGQNKSGYRRFGWRSVFQFCVPFSLGALVSAVLIEGHRDELTPTISARSLKGRRNEFNFIADVVAGCGDSVVYIEIKDTRHFDYFSGQPITASNGSGFVIEQNGLILTNAHVVINKPHTMVQVRLSDGRTFPATIEDVDQTSDLATLRIHVSGLPVMKLGKSSTLRSGEWVVALGSPLALSNTVTAGVISATQRASQELGLRNRDINYLQTDAAITFGNSGGPLVNLDGEAIGVNSMKVTAGISFAIPIDYVKVFLERAAERRKKGSAHKTGYPVKRYMGITMLTLTPDILFELKSRSQNMPNNLMHGVLVWKVIVGSPAHSGGLQPGDIVTHINKKEIKNSSDVYDALAEGRKDLEIVILRGVKQMHVKITPEDP</sequence>
<proteinExistence type="inferred from homology"/>
<name>HTRA2_DROPE</name>
<comment type="function">
    <text evidence="2">Serine protease that shows proteolytic activity against a non-specific substrate beta-casein. Promotes or induces cell death either by direct binding to and inhibition of BIRC proteins (also called inhibitor of apoptosis proteins, IAPs), leading to an increase in caspase activity, or by a BIRC inhibition-independent, caspase-independent and serine protease activity-dependent mechanism. Can antagonize antiapoptotic activity of th/Diap1 by directly inducing the degradation of th/Diap1 (By similarity).</text>
</comment>
<comment type="catalytic activity">
    <reaction>
        <text>Cleavage of non-polar aliphatic amino-acids at the P1 position, with a preference for Val, Ile and Met. At the P2 and P3 positions, Arg is selected most strongly with a secondary preference for other hydrophilic residues.</text>
        <dbReference type="EC" id="3.4.21.108"/>
    </reaction>
</comment>
<comment type="subunit">
    <text evidence="2">Interacts with th/DIAP1 (via BIR 2 domain).</text>
</comment>
<comment type="subcellular location">
    <subcellularLocation>
        <location evidence="2">Mitochondrion intermembrane space</location>
        <topology evidence="3">Single-pass membrane protein</topology>
    </subcellularLocation>
    <subcellularLocation>
        <location evidence="2">Mitochondrion membrane</location>
        <topology evidence="3">Single-pass membrane protein</topology>
    </subcellularLocation>
    <text evidence="2">Predominantly present in the intermembrane space. Released into the cytosol following apoptotic stimuli, such as UV treatment. The extramitochondrial protein does not diffuse throughout the cytosol but stays near the mitochondria.</text>
</comment>
<comment type="similarity">
    <text evidence="3">Belongs to the peptidase S1C family.</text>
</comment>
<evidence type="ECO:0000250" key="1">
    <source>
        <dbReference type="UniProtKB" id="O43464"/>
    </source>
</evidence>
<evidence type="ECO:0000250" key="2">
    <source>
        <dbReference type="UniProtKB" id="Q9VFJ3"/>
    </source>
</evidence>
<evidence type="ECO:0000255" key="3"/>
<evidence type="ECO:0000255" key="4">
    <source>
        <dbReference type="PROSITE-ProRule" id="PRU00143"/>
    </source>
</evidence>
<evidence type="ECO:0000256" key="5">
    <source>
        <dbReference type="SAM" id="MobiDB-lite"/>
    </source>
</evidence>
<evidence type="ECO:0000312" key="6">
    <source>
        <dbReference type="EMBL" id="EDW24211.1"/>
    </source>
</evidence>
<dbReference type="EC" id="3.4.21.108"/>
<dbReference type="EMBL" id="CH479179">
    <property type="protein sequence ID" value="EDW24211.1"/>
    <property type="molecule type" value="Genomic_DNA"/>
</dbReference>
<dbReference type="SMR" id="B4G316"/>
<dbReference type="STRING" id="7234.B4G316"/>
<dbReference type="EnsemblMetazoa" id="FBtr0189629">
    <property type="protein sequence ID" value="FBpp0188121"/>
    <property type="gene ID" value="FBgn0161604"/>
</dbReference>
<dbReference type="EnsemblMetazoa" id="XM_002013189.2">
    <property type="protein sequence ID" value="XP_002013225.1"/>
    <property type="gene ID" value="LOC6588623"/>
</dbReference>
<dbReference type="GeneID" id="6588623"/>
<dbReference type="KEGG" id="dpe:6588623"/>
<dbReference type="CTD" id="27429"/>
<dbReference type="eggNOG" id="KOG1320">
    <property type="taxonomic scope" value="Eukaryota"/>
</dbReference>
<dbReference type="HOGENOM" id="CLU_020120_6_0_1"/>
<dbReference type="OMA" id="IMSPEGY"/>
<dbReference type="OrthoDB" id="4217619at2759"/>
<dbReference type="PhylomeDB" id="B4G316"/>
<dbReference type="Proteomes" id="UP000008744">
    <property type="component" value="Unassembled WGS sequence"/>
</dbReference>
<dbReference type="GO" id="GO:0005758">
    <property type="term" value="C:mitochondrial intermembrane space"/>
    <property type="evidence" value="ECO:0007669"/>
    <property type="project" value="UniProtKB-SubCell"/>
</dbReference>
<dbReference type="GO" id="GO:0031966">
    <property type="term" value="C:mitochondrial membrane"/>
    <property type="evidence" value="ECO:0007669"/>
    <property type="project" value="UniProtKB-SubCell"/>
</dbReference>
<dbReference type="GO" id="GO:0004252">
    <property type="term" value="F:serine-type endopeptidase activity"/>
    <property type="evidence" value="ECO:0007669"/>
    <property type="project" value="InterPro"/>
</dbReference>
<dbReference type="GO" id="GO:0006915">
    <property type="term" value="P:apoptotic process"/>
    <property type="evidence" value="ECO:0007669"/>
    <property type="project" value="UniProtKB-KW"/>
</dbReference>
<dbReference type="GO" id="GO:0043065">
    <property type="term" value="P:positive regulation of apoptotic process"/>
    <property type="evidence" value="ECO:0007669"/>
    <property type="project" value="TreeGrafter"/>
</dbReference>
<dbReference type="GO" id="GO:0006508">
    <property type="term" value="P:proteolysis"/>
    <property type="evidence" value="ECO:0007669"/>
    <property type="project" value="UniProtKB-KW"/>
</dbReference>
<dbReference type="CDD" id="cd06785">
    <property type="entry name" value="cpPDZ_HtrA-like"/>
    <property type="match status" value="1"/>
</dbReference>
<dbReference type="FunFam" id="2.40.10.120:FF:000004">
    <property type="entry name" value="Serine protease HTRA2, mitochondrial"/>
    <property type="match status" value="1"/>
</dbReference>
<dbReference type="Gene3D" id="2.30.42.10">
    <property type="match status" value="1"/>
</dbReference>
<dbReference type="Gene3D" id="2.40.10.120">
    <property type="match status" value="1"/>
</dbReference>
<dbReference type="InterPro" id="IPR001478">
    <property type="entry name" value="PDZ"/>
</dbReference>
<dbReference type="InterPro" id="IPR041489">
    <property type="entry name" value="PDZ_6"/>
</dbReference>
<dbReference type="InterPro" id="IPR036034">
    <property type="entry name" value="PDZ_sf"/>
</dbReference>
<dbReference type="InterPro" id="IPR009003">
    <property type="entry name" value="Peptidase_S1_PA"/>
</dbReference>
<dbReference type="InterPro" id="IPR001940">
    <property type="entry name" value="Peptidase_S1C"/>
</dbReference>
<dbReference type="PANTHER" id="PTHR22939">
    <property type="entry name" value="SERINE PROTEASE FAMILY S1C HTRA-RELATED"/>
    <property type="match status" value="1"/>
</dbReference>
<dbReference type="PANTHER" id="PTHR22939:SF129">
    <property type="entry name" value="SERINE PROTEASE HTRA2, MITOCHONDRIAL"/>
    <property type="match status" value="1"/>
</dbReference>
<dbReference type="Pfam" id="PF17820">
    <property type="entry name" value="PDZ_6"/>
    <property type="match status" value="1"/>
</dbReference>
<dbReference type="Pfam" id="PF13365">
    <property type="entry name" value="Trypsin_2"/>
    <property type="match status" value="1"/>
</dbReference>
<dbReference type="PRINTS" id="PR00834">
    <property type="entry name" value="PROTEASES2C"/>
</dbReference>
<dbReference type="SMART" id="SM00228">
    <property type="entry name" value="PDZ"/>
    <property type="match status" value="1"/>
</dbReference>
<dbReference type="SUPFAM" id="SSF50156">
    <property type="entry name" value="PDZ domain-like"/>
    <property type="match status" value="1"/>
</dbReference>
<dbReference type="SUPFAM" id="SSF50494">
    <property type="entry name" value="Trypsin-like serine proteases"/>
    <property type="match status" value="1"/>
</dbReference>
<dbReference type="PROSITE" id="PS50106">
    <property type="entry name" value="PDZ"/>
    <property type="match status" value="1"/>
</dbReference>
<reference evidence="6" key="1">
    <citation type="journal article" date="2007" name="Nature">
        <title>Evolution of genes and genomes on the Drosophila phylogeny.</title>
        <authorList>
            <consortium name="Drosophila 12 genomes consortium"/>
        </authorList>
    </citation>
    <scope>NUCLEOTIDE SEQUENCE [LARGE SCALE GENOMIC DNA]</scope>
    <source>
        <strain>MSH-3 / Tucson 14011-0111.49</strain>
    </source>
</reference>
<protein>
    <recommendedName>
        <fullName evidence="2">Serine protease HTRA2, mitochondrial</fullName>
        <ecNumber>3.4.21.108</ecNumber>
    </recommendedName>
    <alternativeName>
        <fullName evidence="2">High temperature requirement protein A2</fullName>
    </alternativeName>
</protein>